<reference key="1">
    <citation type="journal article" date="2005" name="BMC Genomics">
        <title>Characterization of 954 bovine full-CDS cDNA sequences.</title>
        <authorList>
            <person name="Harhay G.P."/>
            <person name="Sonstegard T.S."/>
            <person name="Keele J.W."/>
            <person name="Heaton M.P."/>
            <person name="Clawson M.L."/>
            <person name="Snelling W.M."/>
            <person name="Wiedmann R.T."/>
            <person name="Van Tassell C.P."/>
            <person name="Smith T.P.L."/>
        </authorList>
    </citation>
    <scope>NUCLEOTIDE SEQUENCE [LARGE SCALE MRNA]</scope>
</reference>
<reference key="2">
    <citation type="journal article" date="1994" name="J. Cell Biol.">
        <title>Human CENP-A contains a histone H3 related histone fold domain that is required for targeting to the centromere.</title>
        <authorList>
            <person name="Sullivan K.F."/>
            <person name="Hechenberger M."/>
            <person name="Masri K."/>
        </authorList>
    </citation>
    <scope>NUCLEOTIDE SEQUENCE [MRNA] OF 53-125</scope>
</reference>
<reference key="3">
    <citation type="journal article" date="1991" name="Proc. Natl. Acad. Sci. U.S.A.">
        <title>Purification of the centromere-specific protein CENP-A and demonstration that it is a distinctive histone.</title>
        <authorList>
            <person name="Palmer D.K."/>
            <person name="O'Day K."/>
            <person name="Trong H.L."/>
            <person name="Charbonneau H."/>
            <person name="Margolis R.L."/>
        </authorList>
    </citation>
    <scope>PARTIAL PROTEIN SEQUENCE</scope>
</reference>
<accession>P49449</accession>
<feature type="initiator methionine" description="Removed" evidence="2">
    <location>
        <position position="1"/>
    </location>
</feature>
<feature type="chain" id="PRO_0000221372" description="Histone H3-like centromeric protein A">
    <location>
        <begin position="2"/>
        <end position="138"/>
    </location>
</feature>
<feature type="region of interest" description="Disordered" evidence="3">
    <location>
        <begin position="1"/>
        <end position="40"/>
    </location>
</feature>
<feature type="region of interest" description="Important for flexibility of DNA ends that protrude from nucleosomes" evidence="2">
    <location>
        <begin position="37"/>
        <end position="52"/>
    </location>
</feature>
<feature type="region of interest" description="H3-like">
    <location>
        <begin position="39"/>
        <end position="138"/>
    </location>
</feature>
<feature type="region of interest" description="CATD">
    <location>
        <begin position="73"/>
        <end position="114"/>
    </location>
</feature>
<feature type="compositionally biased region" description="Pro residues" evidence="3">
    <location>
        <begin position="19"/>
        <end position="28"/>
    </location>
</feature>
<feature type="modified residue" description="N,N,N-trimethylglycine" evidence="2">
    <location>
        <position position="2"/>
    </location>
</feature>
<feature type="modified residue" description="Phosphoserine" evidence="2">
    <location>
        <position position="19"/>
    </location>
</feature>
<dbReference type="EMBL" id="CB455530">
    <property type="status" value="NOT_ANNOTATED_CDS"/>
    <property type="molecule type" value="mRNA"/>
</dbReference>
<dbReference type="EMBL" id="U14519">
    <property type="protein sequence ID" value="AAA57417.1"/>
    <property type="molecule type" value="mRNA"/>
</dbReference>
<dbReference type="PIR" id="I46071">
    <property type="entry name" value="I46071"/>
</dbReference>
<dbReference type="SMR" id="P49449"/>
<dbReference type="FunCoup" id="P49449">
    <property type="interactions" value="372"/>
</dbReference>
<dbReference type="STRING" id="9913.ENSBTAP00000063736"/>
<dbReference type="PaxDb" id="9913-ENSBTAP00000032858"/>
<dbReference type="eggNOG" id="KOG1745">
    <property type="taxonomic scope" value="Eukaryota"/>
</dbReference>
<dbReference type="InParanoid" id="P49449"/>
<dbReference type="OrthoDB" id="842664at2759"/>
<dbReference type="Proteomes" id="UP000009136">
    <property type="component" value="Unplaced"/>
</dbReference>
<dbReference type="GO" id="GO:0000775">
    <property type="term" value="C:chromosome, centromeric region"/>
    <property type="evidence" value="ECO:0007669"/>
    <property type="project" value="UniProtKB-SubCell"/>
</dbReference>
<dbReference type="GO" id="GO:0000786">
    <property type="term" value="C:nucleosome"/>
    <property type="evidence" value="ECO:0007669"/>
    <property type="project" value="UniProtKB-KW"/>
</dbReference>
<dbReference type="GO" id="GO:0005634">
    <property type="term" value="C:nucleus"/>
    <property type="evidence" value="ECO:0000318"/>
    <property type="project" value="GO_Central"/>
</dbReference>
<dbReference type="GO" id="GO:0003677">
    <property type="term" value="F:DNA binding"/>
    <property type="evidence" value="ECO:0007669"/>
    <property type="project" value="UniProtKB-KW"/>
</dbReference>
<dbReference type="GO" id="GO:0046982">
    <property type="term" value="F:protein heterodimerization activity"/>
    <property type="evidence" value="ECO:0007669"/>
    <property type="project" value="InterPro"/>
</dbReference>
<dbReference type="GO" id="GO:0030527">
    <property type="term" value="F:structural constituent of chromatin"/>
    <property type="evidence" value="ECO:0007669"/>
    <property type="project" value="InterPro"/>
</dbReference>
<dbReference type="CDD" id="cd22911">
    <property type="entry name" value="HFD_H3"/>
    <property type="match status" value="1"/>
</dbReference>
<dbReference type="FunFam" id="1.10.20.10:FF:000065">
    <property type="entry name" value="Histone H3-like centromeric protein A"/>
    <property type="match status" value="1"/>
</dbReference>
<dbReference type="Gene3D" id="1.10.20.10">
    <property type="entry name" value="Histone, subunit A"/>
    <property type="match status" value="1"/>
</dbReference>
<dbReference type="InterPro" id="IPR009072">
    <property type="entry name" value="Histone-fold"/>
</dbReference>
<dbReference type="InterPro" id="IPR007125">
    <property type="entry name" value="Histone_H2A/H2B/H3"/>
</dbReference>
<dbReference type="InterPro" id="IPR000164">
    <property type="entry name" value="Histone_H3/CENP-A"/>
</dbReference>
<dbReference type="PANTHER" id="PTHR45810:SF14">
    <property type="entry name" value="CENTROMERE PROTEIN A"/>
    <property type="match status" value="1"/>
</dbReference>
<dbReference type="PANTHER" id="PTHR45810">
    <property type="entry name" value="HISTONE H3.2"/>
    <property type="match status" value="1"/>
</dbReference>
<dbReference type="Pfam" id="PF00125">
    <property type="entry name" value="Histone"/>
    <property type="match status" value="1"/>
</dbReference>
<dbReference type="PRINTS" id="PR00622">
    <property type="entry name" value="HISTONEH3"/>
</dbReference>
<dbReference type="SMART" id="SM00428">
    <property type="entry name" value="H3"/>
    <property type="match status" value="1"/>
</dbReference>
<dbReference type="SUPFAM" id="SSF47113">
    <property type="entry name" value="Histone-fold"/>
    <property type="match status" value="1"/>
</dbReference>
<dbReference type="PROSITE" id="PS00959">
    <property type="entry name" value="HISTONE_H3_2"/>
    <property type="match status" value="1"/>
</dbReference>
<proteinExistence type="evidence at protein level"/>
<organism>
    <name type="scientific">Bos taurus</name>
    <name type="common">Bovine</name>
    <dbReference type="NCBI Taxonomy" id="9913"/>
    <lineage>
        <taxon>Eukaryota</taxon>
        <taxon>Metazoa</taxon>
        <taxon>Chordata</taxon>
        <taxon>Craniata</taxon>
        <taxon>Vertebrata</taxon>
        <taxon>Euteleostomi</taxon>
        <taxon>Mammalia</taxon>
        <taxon>Eutheria</taxon>
        <taxon>Laurasiatheria</taxon>
        <taxon>Artiodactyla</taxon>
        <taxon>Ruminantia</taxon>
        <taxon>Pecora</taxon>
        <taxon>Bovidae</taxon>
        <taxon>Bovinae</taxon>
        <taxon>Bos</taxon>
    </lineage>
</organism>
<sequence>MGPRRQKRKPETPRRRPASPAPAAPRPTPSLGTSSRPLARRRHTVLKEIRTLQKTTHLLLRKSPFCRLAREICVQFTRGVDFNWQAQALLALQEAAEAFLVHLFEDAYLLSLHAGRVTLFPKDVQLARRIRGIQEGLG</sequence>
<comment type="function">
    <text evidence="2">Histone H3-like nucleosomal protein that is specifically found in centromeric nucleosomes. Replaces conventional H3 in the nucleosome core of centromeric chromatin that serves as an assembly site for the inner kinetochore. The presence of CENPA subtly modifies the nucleosome structure and the way DNA is wrapped around the nucleosome and gives rise to protruding DNA ends that are less well-ordered and rigid compared to nucleosomes containing histone H3. May serve as an epigenetic mark that propagates centromere identity through replication and cell division. Required for recruitment and assembly of kinetochore proteins, and as a consequence required for progress through mitosis, chromosome segregation and cytokinesis.</text>
</comment>
<comment type="subunit">
    <text evidence="2">Component of centromeric nucleosomes, where DNA is wrapped around a histone octamer core. The octamer contains two molecules each of H2A, H2B, CENPA and H4 assembled in one CENPA-H4 heterotetramer and two H2A-H2B heterodimers. CENPA modulates the DNA-binding characteristics of nucleosomes so that protruding DNA ends have higher flexibility than in nucleosomes containing conventional histone H3. Inhibits binding of histone H1 to nucleosomes, since histone H1 binds preferentially to rigid DNA linkers that protrude from nucleosomes. Nucleosomes containing CENPA also contain histone H2A variants such as MACROH2A and H2A.Z/H2AZ1. The CENPA-H4 heterotetramer is more compact and structurally more rigid than corresponding H3-H4 heterotetramers. Can assemble into nucleosomes that contain both CENPA and histone H3.3; these nucleosomes interact with a single CENPC chain. Heterotrimer composed of HJURP, CENPA and histone H4, where HJURP interacts with the dimer formed by CENPA and histone H4 and prevents tetramerization of CENPA and H4. Component of the CENPA-NAC complex, at least composed of CENPA, CENPC, CENPH, CENPM, CENPN, CENPT and CENPU. Interacts (via CATD domain) with HJURP; the interaction is direct and is required for its localization to centromeres. Interacts with CENPC, CENPN and CENPT; interaction is direct. Part of a centromere complex consisting of CENPA, CENPT and CENPW. Identified in centromere complexes containing histones H2A, H2B and H4, and at least CENPA, CENPB, CENPC, CENPT, CENPN, HJURP, SUPT16H, SSRP1 and RSF1. Can self-associate. The CENPA-H4 heterotetramer can bind DNA by itself (in vitro). Interacts with CDK1, PPP1CA and RBBP7.</text>
</comment>
<comment type="subcellular location">
    <subcellularLocation>
        <location evidence="2">Nucleus</location>
    </subcellularLocation>
    <subcellularLocation>
        <location evidence="2">Chromosome</location>
        <location evidence="2">Centromere</location>
    </subcellularLocation>
    <text evidence="2">Localizes exclusively to sites of kinetochore assembly in centromeres. Occupies a compact domain at the inner kinetochore plate stretching across 2 thirds of the length of the constriction but encompassing only one third of the constriction width and height.</text>
</comment>
<comment type="domain">
    <text evidence="2">The CATD (CENPA targeting domain) region is responsible for the more compact structure of nucleosomes containing CENPA. It is necessary and sufficient to mediate the localization into centromeres.</text>
</comment>
<comment type="PTM">
    <text evidence="2">Trimethylated by NTMT1 at the N-terminal glycine after cleavage of Met-1. Methylation is low before incorporation into nucleosomes and increases with cell cycle progression, with the highest levels in mitotic nucleosomes.</text>
</comment>
<comment type="PTM">
    <text evidence="1">Poly-ADP-ribosylated by PARP1.</text>
</comment>
<comment type="similarity">
    <text evidence="4">Belongs to the histone H3 family.</text>
</comment>
<evidence type="ECO:0000250" key="1">
    <source>
        <dbReference type="UniProtKB" id="O35216"/>
    </source>
</evidence>
<evidence type="ECO:0000250" key="2">
    <source>
        <dbReference type="UniProtKB" id="P49450"/>
    </source>
</evidence>
<evidence type="ECO:0000256" key="3">
    <source>
        <dbReference type="SAM" id="MobiDB-lite"/>
    </source>
</evidence>
<evidence type="ECO:0000305" key="4"/>
<name>CENPA_BOVIN</name>
<gene>
    <name type="primary">CENPA</name>
</gene>
<protein>
    <recommendedName>
        <fullName>Histone H3-like centromeric protein A</fullName>
    </recommendedName>
    <alternativeName>
        <fullName>Centromere protein A</fullName>
        <shortName>CENP-A</shortName>
    </alternativeName>
</protein>
<keyword id="KW-0013">ADP-ribosylation</keyword>
<keyword id="KW-0137">Centromere</keyword>
<keyword id="KW-0158">Chromosome</keyword>
<keyword id="KW-0903">Direct protein sequencing</keyword>
<keyword id="KW-0238">DNA-binding</keyword>
<keyword id="KW-0488">Methylation</keyword>
<keyword id="KW-0544">Nucleosome core</keyword>
<keyword id="KW-0539">Nucleus</keyword>
<keyword id="KW-0597">Phosphoprotein</keyword>
<keyword id="KW-1185">Reference proteome</keyword>